<comment type="function">
    <text evidence="1">Digests double-stranded RNA. Involved in the processing of primary rRNA transcript to yield the immediate precursors to the large and small rRNAs (23S and 16S). Processes some mRNAs, and tRNAs when they are encoded in the rRNA operon. Processes pre-crRNA and tracrRNA of type II CRISPR loci if present in the organism.</text>
</comment>
<comment type="catalytic activity">
    <reaction evidence="1">
        <text>Endonucleolytic cleavage to 5'-phosphomonoester.</text>
        <dbReference type="EC" id="3.1.26.3"/>
    </reaction>
</comment>
<comment type="cofactor">
    <cofactor evidence="1">
        <name>Mg(2+)</name>
        <dbReference type="ChEBI" id="CHEBI:18420"/>
    </cofactor>
</comment>
<comment type="subunit">
    <text evidence="1">Homodimer.</text>
</comment>
<comment type="subcellular location">
    <subcellularLocation>
        <location evidence="1">Cytoplasm</location>
    </subcellularLocation>
</comment>
<comment type="similarity">
    <text evidence="1">Belongs to the ribonuclease III family.</text>
</comment>
<reference key="1">
    <citation type="journal article" date="2003" name="Proc. Natl. Acad. Sci. U.S.A.">
        <title>Complete genome sequence and analysis of Wolinella succinogenes.</title>
        <authorList>
            <person name="Baar C."/>
            <person name="Eppinger M."/>
            <person name="Raddatz G."/>
            <person name="Simon J."/>
            <person name="Lanz C."/>
            <person name="Klimmek O."/>
            <person name="Nandakumar R."/>
            <person name="Gross R."/>
            <person name="Rosinus A."/>
            <person name="Keller H."/>
            <person name="Jagtap P."/>
            <person name="Linke B."/>
            <person name="Meyer F."/>
            <person name="Lederer H."/>
            <person name="Schuster S.C."/>
        </authorList>
    </citation>
    <scope>NUCLEOTIDE SEQUENCE [LARGE SCALE GENOMIC DNA]</scope>
    <source>
        <strain>ATCC 29543 / DSM 1740 / CCUG 13145 / JCM 31913 / LMG 7466 / NCTC 11488 / FDC 602W</strain>
    </source>
</reference>
<gene>
    <name evidence="1" type="primary">rnc</name>
    <name type="ordered locus">WS1899</name>
</gene>
<name>RNC_WOLSU</name>
<proteinExistence type="inferred from homology"/>
<protein>
    <recommendedName>
        <fullName evidence="1">Ribonuclease 3</fullName>
        <ecNumber evidence="1">3.1.26.3</ecNumber>
    </recommendedName>
    <alternativeName>
        <fullName evidence="1">Ribonuclease III</fullName>
        <shortName evidence="1">RNase III</shortName>
    </alternativeName>
</protein>
<dbReference type="EC" id="3.1.26.3" evidence="1"/>
<dbReference type="EMBL" id="BX571662">
    <property type="protein sequence ID" value="CAE10908.1"/>
    <property type="molecule type" value="Genomic_DNA"/>
</dbReference>
<dbReference type="RefSeq" id="WP_011139691.1">
    <property type="nucleotide sequence ID" value="NC_005090.1"/>
</dbReference>
<dbReference type="SMR" id="Q7M840"/>
<dbReference type="STRING" id="273121.WS1899"/>
<dbReference type="KEGG" id="wsu:WS1899"/>
<dbReference type="eggNOG" id="COG0571">
    <property type="taxonomic scope" value="Bacteria"/>
</dbReference>
<dbReference type="HOGENOM" id="CLU_000907_1_3_7"/>
<dbReference type="Proteomes" id="UP000000422">
    <property type="component" value="Chromosome"/>
</dbReference>
<dbReference type="GO" id="GO:0005737">
    <property type="term" value="C:cytoplasm"/>
    <property type="evidence" value="ECO:0007669"/>
    <property type="project" value="UniProtKB-SubCell"/>
</dbReference>
<dbReference type="GO" id="GO:0003725">
    <property type="term" value="F:double-stranded RNA binding"/>
    <property type="evidence" value="ECO:0007669"/>
    <property type="project" value="TreeGrafter"/>
</dbReference>
<dbReference type="GO" id="GO:0046872">
    <property type="term" value="F:metal ion binding"/>
    <property type="evidence" value="ECO:0007669"/>
    <property type="project" value="UniProtKB-KW"/>
</dbReference>
<dbReference type="GO" id="GO:0004525">
    <property type="term" value="F:ribonuclease III activity"/>
    <property type="evidence" value="ECO:0007669"/>
    <property type="project" value="UniProtKB-UniRule"/>
</dbReference>
<dbReference type="GO" id="GO:0019843">
    <property type="term" value="F:rRNA binding"/>
    <property type="evidence" value="ECO:0007669"/>
    <property type="project" value="UniProtKB-KW"/>
</dbReference>
<dbReference type="GO" id="GO:0006397">
    <property type="term" value="P:mRNA processing"/>
    <property type="evidence" value="ECO:0007669"/>
    <property type="project" value="UniProtKB-UniRule"/>
</dbReference>
<dbReference type="GO" id="GO:0010468">
    <property type="term" value="P:regulation of gene expression"/>
    <property type="evidence" value="ECO:0007669"/>
    <property type="project" value="TreeGrafter"/>
</dbReference>
<dbReference type="GO" id="GO:0006364">
    <property type="term" value="P:rRNA processing"/>
    <property type="evidence" value="ECO:0007669"/>
    <property type="project" value="UniProtKB-UniRule"/>
</dbReference>
<dbReference type="GO" id="GO:0008033">
    <property type="term" value="P:tRNA processing"/>
    <property type="evidence" value="ECO:0007669"/>
    <property type="project" value="UniProtKB-KW"/>
</dbReference>
<dbReference type="CDD" id="cd10845">
    <property type="entry name" value="DSRM_RNAse_III_family"/>
    <property type="match status" value="1"/>
</dbReference>
<dbReference type="CDD" id="cd00593">
    <property type="entry name" value="RIBOc"/>
    <property type="match status" value="1"/>
</dbReference>
<dbReference type="FunFam" id="1.10.1520.10:FF:000001">
    <property type="entry name" value="Ribonuclease 3"/>
    <property type="match status" value="1"/>
</dbReference>
<dbReference type="FunFam" id="3.30.160.20:FF:000003">
    <property type="entry name" value="Ribonuclease 3"/>
    <property type="match status" value="1"/>
</dbReference>
<dbReference type="Gene3D" id="3.30.160.20">
    <property type="match status" value="1"/>
</dbReference>
<dbReference type="Gene3D" id="1.10.1520.10">
    <property type="entry name" value="Ribonuclease III domain"/>
    <property type="match status" value="1"/>
</dbReference>
<dbReference type="HAMAP" id="MF_00104">
    <property type="entry name" value="RNase_III"/>
    <property type="match status" value="1"/>
</dbReference>
<dbReference type="InterPro" id="IPR014720">
    <property type="entry name" value="dsRBD_dom"/>
</dbReference>
<dbReference type="InterPro" id="IPR011907">
    <property type="entry name" value="RNase_III"/>
</dbReference>
<dbReference type="InterPro" id="IPR000999">
    <property type="entry name" value="RNase_III_dom"/>
</dbReference>
<dbReference type="InterPro" id="IPR036389">
    <property type="entry name" value="RNase_III_sf"/>
</dbReference>
<dbReference type="NCBIfam" id="TIGR02191">
    <property type="entry name" value="RNaseIII"/>
    <property type="match status" value="1"/>
</dbReference>
<dbReference type="PANTHER" id="PTHR11207:SF0">
    <property type="entry name" value="RIBONUCLEASE 3"/>
    <property type="match status" value="1"/>
</dbReference>
<dbReference type="PANTHER" id="PTHR11207">
    <property type="entry name" value="RIBONUCLEASE III"/>
    <property type="match status" value="1"/>
</dbReference>
<dbReference type="Pfam" id="PF00035">
    <property type="entry name" value="dsrm"/>
    <property type="match status" value="1"/>
</dbReference>
<dbReference type="Pfam" id="PF14622">
    <property type="entry name" value="Ribonucleas_3_3"/>
    <property type="match status" value="1"/>
</dbReference>
<dbReference type="SMART" id="SM00358">
    <property type="entry name" value="DSRM"/>
    <property type="match status" value="1"/>
</dbReference>
<dbReference type="SMART" id="SM00535">
    <property type="entry name" value="RIBOc"/>
    <property type="match status" value="1"/>
</dbReference>
<dbReference type="SUPFAM" id="SSF54768">
    <property type="entry name" value="dsRNA-binding domain-like"/>
    <property type="match status" value="1"/>
</dbReference>
<dbReference type="SUPFAM" id="SSF69065">
    <property type="entry name" value="RNase III domain-like"/>
    <property type="match status" value="1"/>
</dbReference>
<dbReference type="PROSITE" id="PS50137">
    <property type="entry name" value="DS_RBD"/>
    <property type="match status" value="1"/>
</dbReference>
<dbReference type="PROSITE" id="PS00517">
    <property type="entry name" value="RNASE_3_1"/>
    <property type="match status" value="1"/>
</dbReference>
<dbReference type="PROSITE" id="PS50142">
    <property type="entry name" value="RNASE_3_2"/>
    <property type="match status" value="1"/>
</dbReference>
<accession>Q7M840</accession>
<sequence>MESIEEFEKRLGYRFQNKNLLIEALTHKSYKKPYNNERLEFLGDAVLDLVIGEFLFLKFPKADEGELSKMRASLVNEKGFAKLAERVSLGRHIFISNAEENNKGREKPSLLSNAFEATMGAIYLETGLSVVREVVHRLLDEVYPKIDLGSLFRDYKTALQELTQAKFGETPEYVILGSSGPDHKKEFEVAVCVLGSEYARACGSSKKEAQQEAARIALEIFHRKEKEAKESALKGKSE</sequence>
<evidence type="ECO:0000255" key="1">
    <source>
        <dbReference type="HAMAP-Rule" id="MF_00104"/>
    </source>
</evidence>
<keyword id="KW-0963">Cytoplasm</keyword>
<keyword id="KW-0255">Endonuclease</keyword>
<keyword id="KW-0378">Hydrolase</keyword>
<keyword id="KW-0460">Magnesium</keyword>
<keyword id="KW-0479">Metal-binding</keyword>
<keyword id="KW-0507">mRNA processing</keyword>
<keyword id="KW-0540">Nuclease</keyword>
<keyword id="KW-1185">Reference proteome</keyword>
<keyword id="KW-0694">RNA-binding</keyword>
<keyword id="KW-0698">rRNA processing</keyword>
<keyword id="KW-0699">rRNA-binding</keyword>
<keyword id="KW-0819">tRNA processing</keyword>
<organism>
    <name type="scientific">Wolinella succinogenes (strain ATCC 29543 / DSM 1740 / CCUG 13145 / JCM 31913 / LMG 7466 / NCTC 11488 / FDC 602W)</name>
    <name type="common">Vibrio succinogenes</name>
    <dbReference type="NCBI Taxonomy" id="273121"/>
    <lineage>
        <taxon>Bacteria</taxon>
        <taxon>Pseudomonadati</taxon>
        <taxon>Campylobacterota</taxon>
        <taxon>Epsilonproteobacteria</taxon>
        <taxon>Campylobacterales</taxon>
        <taxon>Helicobacteraceae</taxon>
        <taxon>Wolinella</taxon>
    </lineage>
</organism>
<feature type="chain" id="PRO_0000228604" description="Ribonuclease 3">
    <location>
        <begin position="1"/>
        <end position="238"/>
    </location>
</feature>
<feature type="domain" description="RNase III" evidence="1">
    <location>
        <begin position="4"/>
        <end position="127"/>
    </location>
</feature>
<feature type="domain" description="DRBM" evidence="1">
    <location>
        <begin position="154"/>
        <end position="223"/>
    </location>
</feature>
<feature type="active site" evidence="1">
    <location>
        <position position="44"/>
    </location>
</feature>
<feature type="active site" evidence="1">
    <location>
        <position position="116"/>
    </location>
</feature>
<feature type="binding site" evidence="1">
    <location>
        <position position="40"/>
    </location>
    <ligand>
        <name>Mg(2+)</name>
        <dbReference type="ChEBI" id="CHEBI:18420"/>
    </ligand>
</feature>
<feature type="binding site" evidence="1">
    <location>
        <position position="113"/>
    </location>
    <ligand>
        <name>Mg(2+)</name>
        <dbReference type="ChEBI" id="CHEBI:18420"/>
    </ligand>
</feature>
<feature type="binding site" evidence="1">
    <location>
        <position position="116"/>
    </location>
    <ligand>
        <name>Mg(2+)</name>
        <dbReference type="ChEBI" id="CHEBI:18420"/>
    </ligand>
</feature>